<dbReference type="EMBL" id="CU928161">
    <property type="protein sequence ID" value="CAR03222.1"/>
    <property type="molecule type" value="Genomic_DNA"/>
</dbReference>
<dbReference type="RefSeq" id="WP_000580323.1">
    <property type="nucleotide sequence ID" value="NC_011742.1"/>
</dbReference>
<dbReference type="SMR" id="B7MBS0"/>
<dbReference type="GeneID" id="75057740"/>
<dbReference type="KEGG" id="ecz:ECS88_1918"/>
<dbReference type="HOGENOM" id="CLU_087936_0_0_6"/>
<dbReference type="Proteomes" id="UP000000747">
    <property type="component" value="Chromosome"/>
</dbReference>
<dbReference type="GO" id="GO:0005737">
    <property type="term" value="C:cytoplasm"/>
    <property type="evidence" value="ECO:0007669"/>
    <property type="project" value="UniProtKB-SubCell"/>
</dbReference>
<dbReference type="GO" id="GO:0009379">
    <property type="term" value="C:Holliday junction helicase complex"/>
    <property type="evidence" value="ECO:0007669"/>
    <property type="project" value="InterPro"/>
</dbReference>
<dbReference type="GO" id="GO:0048476">
    <property type="term" value="C:Holliday junction resolvase complex"/>
    <property type="evidence" value="ECO:0007669"/>
    <property type="project" value="UniProtKB-UniRule"/>
</dbReference>
<dbReference type="GO" id="GO:0005524">
    <property type="term" value="F:ATP binding"/>
    <property type="evidence" value="ECO:0007669"/>
    <property type="project" value="InterPro"/>
</dbReference>
<dbReference type="GO" id="GO:0000400">
    <property type="term" value="F:four-way junction DNA binding"/>
    <property type="evidence" value="ECO:0007669"/>
    <property type="project" value="UniProtKB-UniRule"/>
</dbReference>
<dbReference type="GO" id="GO:0009378">
    <property type="term" value="F:four-way junction helicase activity"/>
    <property type="evidence" value="ECO:0007669"/>
    <property type="project" value="InterPro"/>
</dbReference>
<dbReference type="GO" id="GO:0006310">
    <property type="term" value="P:DNA recombination"/>
    <property type="evidence" value="ECO:0007669"/>
    <property type="project" value="UniProtKB-UniRule"/>
</dbReference>
<dbReference type="GO" id="GO:0006281">
    <property type="term" value="P:DNA repair"/>
    <property type="evidence" value="ECO:0007669"/>
    <property type="project" value="UniProtKB-UniRule"/>
</dbReference>
<dbReference type="GO" id="GO:0009432">
    <property type="term" value="P:SOS response"/>
    <property type="evidence" value="ECO:0007669"/>
    <property type="project" value="UniProtKB-UniRule"/>
</dbReference>
<dbReference type="CDD" id="cd14332">
    <property type="entry name" value="UBA_RuvA_C"/>
    <property type="match status" value="1"/>
</dbReference>
<dbReference type="FunFam" id="1.10.150.20:FF:000012">
    <property type="entry name" value="Holliday junction ATP-dependent DNA helicase RuvA"/>
    <property type="match status" value="1"/>
</dbReference>
<dbReference type="FunFam" id="1.10.8.10:FF:000008">
    <property type="entry name" value="Holliday junction ATP-dependent DNA helicase RuvA"/>
    <property type="match status" value="1"/>
</dbReference>
<dbReference type="FunFam" id="2.40.50.140:FF:000083">
    <property type="entry name" value="Holliday junction ATP-dependent DNA helicase RuvA"/>
    <property type="match status" value="1"/>
</dbReference>
<dbReference type="Gene3D" id="1.10.150.20">
    <property type="entry name" value="5' to 3' exonuclease, C-terminal subdomain"/>
    <property type="match status" value="1"/>
</dbReference>
<dbReference type="Gene3D" id="1.10.8.10">
    <property type="entry name" value="DNA helicase RuvA subunit, C-terminal domain"/>
    <property type="match status" value="1"/>
</dbReference>
<dbReference type="Gene3D" id="2.40.50.140">
    <property type="entry name" value="Nucleic acid-binding proteins"/>
    <property type="match status" value="1"/>
</dbReference>
<dbReference type="HAMAP" id="MF_00031">
    <property type="entry name" value="DNA_HJ_migration_RuvA"/>
    <property type="match status" value="1"/>
</dbReference>
<dbReference type="InterPro" id="IPR013849">
    <property type="entry name" value="DNA_helicase_Holl-junc_RuvA_I"/>
</dbReference>
<dbReference type="InterPro" id="IPR003583">
    <property type="entry name" value="Hlx-hairpin-Hlx_DNA-bd_motif"/>
</dbReference>
<dbReference type="InterPro" id="IPR012340">
    <property type="entry name" value="NA-bd_OB-fold"/>
</dbReference>
<dbReference type="InterPro" id="IPR000085">
    <property type="entry name" value="RuvA"/>
</dbReference>
<dbReference type="InterPro" id="IPR010994">
    <property type="entry name" value="RuvA_2-like"/>
</dbReference>
<dbReference type="InterPro" id="IPR011114">
    <property type="entry name" value="RuvA_C"/>
</dbReference>
<dbReference type="InterPro" id="IPR036267">
    <property type="entry name" value="RuvA_C_sf"/>
</dbReference>
<dbReference type="NCBIfam" id="TIGR00084">
    <property type="entry name" value="ruvA"/>
    <property type="match status" value="1"/>
</dbReference>
<dbReference type="Pfam" id="PF14520">
    <property type="entry name" value="HHH_5"/>
    <property type="match status" value="1"/>
</dbReference>
<dbReference type="Pfam" id="PF07499">
    <property type="entry name" value="RuvA_C"/>
    <property type="match status" value="1"/>
</dbReference>
<dbReference type="Pfam" id="PF01330">
    <property type="entry name" value="RuvA_N"/>
    <property type="match status" value="1"/>
</dbReference>
<dbReference type="SMART" id="SM00278">
    <property type="entry name" value="HhH1"/>
    <property type="match status" value="2"/>
</dbReference>
<dbReference type="SUPFAM" id="SSF46929">
    <property type="entry name" value="DNA helicase RuvA subunit, C-terminal domain"/>
    <property type="match status" value="1"/>
</dbReference>
<dbReference type="SUPFAM" id="SSF50249">
    <property type="entry name" value="Nucleic acid-binding proteins"/>
    <property type="match status" value="1"/>
</dbReference>
<dbReference type="SUPFAM" id="SSF47781">
    <property type="entry name" value="RuvA domain 2-like"/>
    <property type="match status" value="1"/>
</dbReference>
<reference key="1">
    <citation type="journal article" date="2009" name="PLoS Genet.">
        <title>Organised genome dynamics in the Escherichia coli species results in highly diverse adaptive paths.</title>
        <authorList>
            <person name="Touchon M."/>
            <person name="Hoede C."/>
            <person name="Tenaillon O."/>
            <person name="Barbe V."/>
            <person name="Baeriswyl S."/>
            <person name="Bidet P."/>
            <person name="Bingen E."/>
            <person name="Bonacorsi S."/>
            <person name="Bouchier C."/>
            <person name="Bouvet O."/>
            <person name="Calteau A."/>
            <person name="Chiapello H."/>
            <person name="Clermont O."/>
            <person name="Cruveiller S."/>
            <person name="Danchin A."/>
            <person name="Diard M."/>
            <person name="Dossat C."/>
            <person name="Karoui M.E."/>
            <person name="Frapy E."/>
            <person name="Garry L."/>
            <person name="Ghigo J.M."/>
            <person name="Gilles A.M."/>
            <person name="Johnson J."/>
            <person name="Le Bouguenec C."/>
            <person name="Lescat M."/>
            <person name="Mangenot S."/>
            <person name="Martinez-Jehanne V."/>
            <person name="Matic I."/>
            <person name="Nassif X."/>
            <person name="Oztas S."/>
            <person name="Petit M.A."/>
            <person name="Pichon C."/>
            <person name="Rouy Z."/>
            <person name="Ruf C.S."/>
            <person name="Schneider D."/>
            <person name="Tourret J."/>
            <person name="Vacherie B."/>
            <person name="Vallenet D."/>
            <person name="Medigue C."/>
            <person name="Rocha E.P.C."/>
            <person name="Denamur E."/>
        </authorList>
    </citation>
    <scope>NUCLEOTIDE SEQUENCE [LARGE SCALE GENOMIC DNA]</scope>
    <source>
        <strain>S88 / ExPEC</strain>
    </source>
</reference>
<keyword id="KW-0963">Cytoplasm</keyword>
<keyword id="KW-0227">DNA damage</keyword>
<keyword id="KW-0233">DNA recombination</keyword>
<keyword id="KW-0234">DNA repair</keyword>
<keyword id="KW-0238">DNA-binding</keyword>
<keyword id="KW-1185">Reference proteome</keyword>
<keyword id="KW-0742">SOS response</keyword>
<sequence>MIGRLRGIIIEKQPPLVLIEVGGVGYEVHMPMTCFYELPEAGQEAIVFTHFVVREDAQLLYGFNNKQERTLFKELIKTNGVGPKLALAILSGMSAQQFVNAVEREEVGALVKLPGIGKKTAERLIVEMKDRFKGLHGDLFTPAADLVLTSPASPATDDAEQEAVAALVALGYKPQEASRMVSKIARPDASSETLIREALRAAL</sequence>
<gene>
    <name evidence="1" type="primary">ruvA</name>
    <name type="ordered locus">ECS88_1918</name>
</gene>
<name>RUVA_ECO45</name>
<evidence type="ECO:0000255" key="1">
    <source>
        <dbReference type="HAMAP-Rule" id="MF_00031"/>
    </source>
</evidence>
<protein>
    <recommendedName>
        <fullName evidence="1">Holliday junction branch migration complex subunit RuvA</fullName>
    </recommendedName>
</protein>
<accession>B7MBS0</accession>
<organism>
    <name type="scientific">Escherichia coli O45:K1 (strain S88 / ExPEC)</name>
    <dbReference type="NCBI Taxonomy" id="585035"/>
    <lineage>
        <taxon>Bacteria</taxon>
        <taxon>Pseudomonadati</taxon>
        <taxon>Pseudomonadota</taxon>
        <taxon>Gammaproteobacteria</taxon>
        <taxon>Enterobacterales</taxon>
        <taxon>Enterobacteriaceae</taxon>
        <taxon>Escherichia</taxon>
    </lineage>
</organism>
<feature type="chain" id="PRO_1000195143" description="Holliday junction branch migration complex subunit RuvA">
    <location>
        <begin position="1"/>
        <end position="203"/>
    </location>
</feature>
<feature type="region of interest" description="Domain I" evidence="1">
    <location>
        <begin position="1"/>
        <end position="64"/>
    </location>
</feature>
<feature type="region of interest" description="Domain II" evidence="1">
    <location>
        <begin position="65"/>
        <end position="142"/>
    </location>
</feature>
<feature type="region of interest" description="Flexible linker" evidence="1">
    <location>
        <begin position="143"/>
        <end position="154"/>
    </location>
</feature>
<feature type="region of interest" description="Domain III" evidence="1">
    <location>
        <begin position="155"/>
        <end position="203"/>
    </location>
</feature>
<comment type="function">
    <text evidence="1">The RuvA-RuvB-RuvC complex processes Holliday junction (HJ) DNA during genetic recombination and DNA repair, while the RuvA-RuvB complex plays an important role in the rescue of blocked DNA replication forks via replication fork reversal (RFR). RuvA specifically binds to HJ cruciform DNA, conferring on it an open structure. The RuvB hexamer acts as an ATP-dependent pump, pulling dsDNA into and through the RuvAB complex. HJ branch migration allows RuvC to scan DNA until it finds its consensus sequence, where it cleaves and resolves the cruciform DNA.</text>
</comment>
<comment type="subunit">
    <text evidence="1">Homotetramer. Forms an RuvA(8)-RuvB(12)-Holliday junction (HJ) complex. HJ DNA is sandwiched between 2 RuvA tetramers; dsDNA enters through RuvA and exits via RuvB. An RuvB hexamer assembles on each DNA strand where it exits the tetramer. Each RuvB hexamer is contacted by two RuvA subunits (via domain III) on 2 adjacent RuvB subunits; this complex drives branch migration. In the full resolvosome a probable DNA-RuvA(4)-RuvB(12)-RuvC(2) complex forms which resolves the HJ.</text>
</comment>
<comment type="subcellular location">
    <subcellularLocation>
        <location evidence="1">Cytoplasm</location>
    </subcellularLocation>
</comment>
<comment type="domain">
    <text evidence="1">Has three domains with a flexible linker between the domains II and III and assumes an 'L' shape. Domain III is highly mobile and contacts RuvB.</text>
</comment>
<comment type="similarity">
    <text evidence="1">Belongs to the RuvA family.</text>
</comment>
<proteinExistence type="inferred from homology"/>